<gene>
    <name evidence="1" type="primary">syd</name>
    <name type="ordered locus">ECIAI39_3215</name>
</gene>
<dbReference type="EMBL" id="CU928164">
    <property type="protein sequence ID" value="CAR19334.1"/>
    <property type="molecule type" value="Genomic_DNA"/>
</dbReference>
<dbReference type="RefSeq" id="WP_000342431.1">
    <property type="nucleotide sequence ID" value="NC_011750.1"/>
</dbReference>
<dbReference type="RefSeq" id="YP_002409139.1">
    <property type="nucleotide sequence ID" value="NC_011750.1"/>
</dbReference>
<dbReference type="SMR" id="B7NVU1"/>
<dbReference type="STRING" id="585057.ECIAI39_3215"/>
<dbReference type="GeneID" id="93779205"/>
<dbReference type="KEGG" id="ect:ECIAI39_3215"/>
<dbReference type="PATRIC" id="fig|585057.6.peg.3340"/>
<dbReference type="HOGENOM" id="CLU_121866_0_0_6"/>
<dbReference type="Proteomes" id="UP000000749">
    <property type="component" value="Chromosome"/>
</dbReference>
<dbReference type="GO" id="GO:0009898">
    <property type="term" value="C:cytoplasmic side of plasma membrane"/>
    <property type="evidence" value="ECO:0007669"/>
    <property type="project" value="InterPro"/>
</dbReference>
<dbReference type="CDD" id="cd16323">
    <property type="entry name" value="Syd"/>
    <property type="match status" value="1"/>
</dbReference>
<dbReference type="FunFam" id="3.40.1580.20:FF:000001">
    <property type="entry name" value="Protein Syd"/>
    <property type="match status" value="1"/>
</dbReference>
<dbReference type="Gene3D" id="3.40.1580.20">
    <property type="entry name" value="Syd protein"/>
    <property type="match status" value="1"/>
</dbReference>
<dbReference type="HAMAP" id="MF_01104">
    <property type="entry name" value="Syd"/>
    <property type="match status" value="1"/>
</dbReference>
<dbReference type="InterPro" id="IPR009948">
    <property type="entry name" value="Syd"/>
</dbReference>
<dbReference type="InterPro" id="IPR038228">
    <property type="entry name" value="Syd_sf"/>
</dbReference>
<dbReference type="NCBIfam" id="NF003439">
    <property type="entry name" value="PRK04968.1"/>
    <property type="match status" value="1"/>
</dbReference>
<dbReference type="Pfam" id="PF07348">
    <property type="entry name" value="Syd"/>
    <property type="match status" value="1"/>
</dbReference>
<keyword id="KW-0997">Cell inner membrane</keyword>
<keyword id="KW-1003">Cell membrane</keyword>
<keyword id="KW-0472">Membrane</keyword>
<proteinExistence type="inferred from homology"/>
<reference key="1">
    <citation type="journal article" date="2009" name="PLoS Genet.">
        <title>Organised genome dynamics in the Escherichia coli species results in highly diverse adaptive paths.</title>
        <authorList>
            <person name="Touchon M."/>
            <person name="Hoede C."/>
            <person name="Tenaillon O."/>
            <person name="Barbe V."/>
            <person name="Baeriswyl S."/>
            <person name="Bidet P."/>
            <person name="Bingen E."/>
            <person name="Bonacorsi S."/>
            <person name="Bouchier C."/>
            <person name="Bouvet O."/>
            <person name="Calteau A."/>
            <person name="Chiapello H."/>
            <person name="Clermont O."/>
            <person name="Cruveiller S."/>
            <person name="Danchin A."/>
            <person name="Diard M."/>
            <person name="Dossat C."/>
            <person name="Karoui M.E."/>
            <person name="Frapy E."/>
            <person name="Garry L."/>
            <person name="Ghigo J.M."/>
            <person name="Gilles A.M."/>
            <person name="Johnson J."/>
            <person name="Le Bouguenec C."/>
            <person name="Lescat M."/>
            <person name="Mangenot S."/>
            <person name="Martinez-Jehanne V."/>
            <person name="Matic I."/>
            <person name="Nassif X."/>
            <person name="Oztas S."/>
            <person name="Petit M.A."/>
            <person name="Pichon C."/>
            <person name="Rouy Z."/>
            <person name="Ruf C.S."/>
            <person name="Schneider D."/>
            <person name="Tourret J."/>
            <person name="Vacherie B."/>
            <person name="Vallenet D."/>
            <person name="Medigue C."/>
            <person name="Rocha E.P.C."/>
            <person name="Denamur E."/>
        </authorList>
    </citation>
    <scope>NUCLEOTIDE SEQUENCE [LARGE SCALE GENOMIC DNA]</scope>
    <source>
        <strain>IAI39 / ExPEC</strain>
    </source>
</reference>
<name>SYDP_ECO7I</name>
<comment type="function">
    <text evidence="1">Interacts with the SecY protein in vivo. May bind preferentially to an uncomplexed state of SecY, thus functioning either as a chelating agent for excess SecY in the cell or as a regulatory factor that negatively controls the translocase function.</text>
</comment>
<comment type="subcellular location">
    <subcellularLocation>
        <location evidence="1">Cell inner membrane</location>
        <topology evidence="1">Peripheral membrane protein</topology>
        <orientation evidence="1">Cytoplasmic side</orientation>
    </subcellularLocation>
    <text evidence="1">Loosely associated with the cytoplasmic side of the inner membrane, probably via SecY.</text>
</comment>
<comment type="similarity">
    <text evidence="1">Belongs to the Syd family.</text>
</comment>
<feature type="chain" id="PRO_1000137026" description="Protein Syd">
    <location>
        <begin position="1"/>
        <end position="181"/>
    </location>
</feature>
<accession>B7NVU1</accession>
<protein>
    <recommendedName>
        <fullName evidence="1">Protein Syd</fullName>
    </recommendedName>
</protein>
<evidence type="ECO:0000255" key="1">
    <source>
        <dbReference type="HAMAP-Rule" id="MF_01104"/>
    </source>
</evidence>
<organism>
    <name type="scientific">Escherichia coli O7:K1 (strain IAI39 / ExPEC)</name>
    <dbReference type="NCBI Taxonomy" id="585057"/>
    <lineage>
        <taxon>Bacteria</taxon>
        <taxon>Pseudomonadati</taxon>
        <taxon>Pseudomonadota</taxon>
        <taxon>Gammaproteobacteria</taxon>
        <taxon>Enterobacterales</taxon>
        <taxon>Enterobacteriaceae</taxon>
        <taxon>Escherichia</taxon>
    </lineage>
</organism>
<sequence length="181" mass="20708">MDDLTAQALKDFTARYCDAWHEEHKSWPLSEELYGVPSPCIISTTEDAVYWQPQPFTGEQNVNAVERAFDIVIQPTIHTFYTTQFAGDMHAQFGDIKLTLLQTWSEDDFRRVQENLIGHLVTQKRLKLPPTLFIATLEEELEVISVCNLSGEVCKETLGTRKRTHLASNLAEFLNQLKPLL</sequence>